<feature type="chain" id="PRO_0000183438" description="Cytochrome c oxidase subunit 1">
    <location>
        <begin position="1"/>
        <end position="564"/>
    </location>
</feature>
<feature type="transmembrane region" description="Helical" evidence="2">
    <location>
        <begin position="43"/>
        <end position="63"/>
    </location>
</feature>
<feature type="transmembrane region" description="Helical" evidence="2">
    <location>
        <begin position="83"/>
        <end position="103"/>
    </location>
</feature>
<feature type="transmembrane region" description="Helical" evidence="2">
    <location>
        <begin position="122"/>
        <end position="142"/>
    </location>
</feature>
<feature type="transmembrane region" description="Helical" evidence="2">
    <location>
        <begin position="171"/>
        <end position="191"/>
    </location>
</feature>
<feature type="transmembrane region" description="Helical" evidence="2">
    <location>
        <begin position="214"/>
        <end position="234"/>
    </location>
</feature>
<feature type="transmembrane region" description="Helical" evidence="2">
    <location>
        <begin position="259"/>
        <end position="279"/>
    </location>
</feature>
<feature type="transmembrane region" description="Helical" evidence="2">
    <location>
        <begin position="292"/>
        <end position="312"/>
    </location>
</feature>
<feature type="transmembrane region" description="Helical" evidence="2">
    <location>
        <begin position="316"/>
        <end position="336"/>
    </location>
</feature>
<feature type="transmembrane region" description="Helical" evidence="2">
    <location>
        <begin position="360"/>
        <end position="380"/>
    </location>
</feature>
<feature type="transmembrane region" description="Helical" evidence="2">
    <location>
        <begin position="399"/>
        <end position="419"/>
    </location>
</feature>
<feature type="transmembrane region" description="Helical" evidence="2">
    <location>
        <begin position="434"/>
        <end position="454"/>
    </location>
</feature>
<feature type="transmembrane region" description="Helical" evidence="2">
    <location>
        <begin position="477"/>
        <end position="497"/>
    </location>
</feature>
<feature type="region of interest" description="Disordered" evidence="3">
    <location>
        <begin position="1"/>
        <end position="23"/>
    </location>
</feature>
<feature type="binding site" description="axial binding residue" evidence="4">
    <location>
        <position position="87"/>
    </location>
    <ligand>
        <name>Fe(II)-heme a</name>
        <dbReference type="ChEBI" id="CHEBI:61715"/>
    </ligand>
    <ligandPart>
        <name>Fe</name>
        <dbReference type="ChEBI" id="CHEBI:18248"/>
    </ligandPart>
</feature>
<feature type="binding site" evidence="4">
    <location>
        <position position="265"/>
    </location>
    <ligand>
        <name>Cu cation</name>
        <dbReference type="ChEBI" id="CHEBI:23378"/>
        <label>B</label>
    </ligand>
</feature>
<feature type="binding site" evidence="4">
    <location>
        <position position="269"/>
    </location>
    <ligand>
        <name>Cu cation</name>
        <dbReference type="ChEBI" id="CHEBI:23378"/>
        <label>B</label>
    </ligand>
</feature>
<feature type="binding site" evidence="4">
    <location>
        <position position="314"/>
    </location>
    <ligand>
        <name>Cu cation</name>
        <dbReference type="ChEBI" id="CHEBI:23378"/>
        <label>B</label>
    </ligand>
</feature>
<feature type="binding site" evidence="4">
    <location>
        <position position="315"/>
    </location>
    <ligand>
        <name>Cu cation</name>
        <dbReference type="ChEBI" id="CHEBI:23378"/>
        <label>B</label>
    </ligand>
</feature>
<feature type="binding site" description="axial binding residue" evidence="4">
    <location>
        <position position="398"/>
    </location>
    <ligand>
        <name>heme a3</name>
        <dbReference type="ChEBI" id="CHEBI:83282"/>
    </ligand>
    <ligandPart>
        <name>Fe</name>
        <dbReference type="ChEBI" id="CHEBI:18248"/>
    </ligandPart>
</feature>
<feature type="binding site" description="axial binding residue" evidence="4">
    <location>
        <position position="400"/>
    </location>
    <ligand>
        <name>Fe(II)-heme a</name>
        <dbReference type="ChEBI" id="CHEBI:61715"/>
    </ligand>
    <ligandPart>
        <name>Fe</name>
        <dbReference type="ChEBI" id="CHEBI:18248"/>
    </ligandPart>
</feature>
<feature type="cross-link" description="1'-histidyl-3'-tyrosine (His-Tyr)" evidence="1">
    <location>
        <begin position="265"/>
        <end position="269"/>
    </location>
</feature>
<name>COX1_CORDI</name>
<evidence type="ECO:0000250" key="1"/>
<evidence type="ECO:0000255" key="2"/>
<evidence type="ECO:0000256" key="3">
    <source>
        <dbReference type="SAM" id="MobiDB-lite"/>
    </source>
</evidence>
<evidence type="ECO:0000305" key="4"/>
<comment type="function">
    <text evidence="1">Cytochrome c oxidase is the component of the respiratory chain that catalyzes the reduction of oxygen to water. Subunits 1-3 form the functional core of the enzyme complex. CO I is the catalytic subunit of the enzyme. Electrons originating in cytochrome c are transferred via the copper A center of subunit 2 and heme A of subunit 1 to the bimetallic center formed by heme A3 and copper B (By similarity).</text>
</comment>
<comment type="catalytic activity">
    <reaction>
        <text>4 Fe(II)-[cytochrome c] + O2 + 8 H(+)(in) = 4 Fe(III)-[cytochrome c] + 2 H2O + 4 H(+)(out)</text>
        <dbReference type="Rhea" id="RHEA:11436"/>
        <dbReference type="Rhea" id="RHEA-COMP:10350"/>
        <dbReference type="Rhea" id="RHEA-COMP:14399"/>
        <dbReference type="ChEBI" id="CHEBI:15377"/>
        <dbReference type="ChEBI" id="CHEBI:15378"/>
        <dbReference type="ChEBI" id="CHEBI:15379"/>
        <dbReference type="ChEBI" id="CHEBI:29033"/>
        <dbReference type="ChEBI" id="CHEBI:29034"/>
        <dbReference type="EC" id="7.1.1.9"/>
    </reaction>
</comment>
<comment type="cofactor">
    <cofactor evidence="1">
        <name>Cu(2+)</name>
        <dbReference type="ChEBI" id="CHEBI:29036"/>
    </cofactor>
    <text evidence="1">Binds 1 copper B ion per subunit.</text>
</comment>
<comment type="cofactor">
    <cofactor evidence="1">
        <name>heme</name>
        <dbReference type="ChEBI" id="CHEBI:30413"/>
    </cofactor>
    <text evidence="1">Binds 2 heme groups per subunit.</text>
</comment>
<comment type="pathway">
    <text>Energy metabolism; oxidative phosphorylation.</text>
</comment>
<comment type="subunit">
    <text evidence="1">Associates with subunits II, III and IV to form cytochrome c oxidase.</text>
</comment>
<comment type="subcellular location">
    <subcellularLocation>
        <location evidence="1">Cell membrane</location>
        <topology evidence="1">Multi-pass membrane protein</topology>
    </subcellularLocation>
</comment>
<comment type="similarity">
    <text evidence="4">Belongs to the heme-copper respiratory oxidase family.</text>
</comment>
<reference key="1">
    <citation type="journal article" date="2003" name="Nucleic Acids Res.">
        <title>The complete genome sequence and analysis of Corynebacterium diphtheriae NCTC13129.</title>
        <authorList>
            <person name="Cerdeno-Tarraga A.-M."/>
            <person name="Efstratiou A."/>
            <person name="Dover L.G."/>
            <person name="Holden M.T.G."/>
            <person name="Pallen M.J."/>
            <person name="Bentley S.D."/>
            <person name="Besra G.S."/>
            <person name="Churcher C.M."/>
            <person name="James K.D."/>
            <person name="De Zoysa A."/>
            <person name="Chillingworth T."/>
            <person name="Cronin A."/>
            <person name="Dowd L."/>
            <person name="Feltwell T."/>
            <person name="Hamlin N."/>
            <person name="Holroyd S."/>
            <person name="Jagels K."/>
            <person name="Moule S."/>
            <person name="Quail M.A."/>
            <person name="Rabbinowitsch E."/>
            <person name="Rutherford K.M."/>
            <person name="Thomson N.R."/>
            <person name="Unwin L."/>
            <person name="Whitehead S."/>
            <person name="Barrell B.G."/>
            <person name="Parkhill J."/>
        </authorList>
    </citation>
    <scope>NUCLEOTIDE SEQUENCE [LARGE SCALE GENOMIC DNA]</scope>
    <source>
        <strain>ATCC 700971 / NCTC 13129 / Biotype gravis</strain>
    </source>
</reference>
<protein>
    <recommendedName>
        <fullName>Cytochrome c oxidase subunit 1</fullName>
        <ecNumber>7.1.1.9</ecNumber>
    </recommendedName>
    <alternativeName>
        <fullName>Cytochrome aa3 subunit 1</fullName>
    </alternativeName>
    <alternativeName>
        <fullName>Cytochrome c oxidase polypeptide I</fullName>
    </alternativeName>
</protein>
<keyword id="KW-1003">Cell membrane</keyword>
<keyword id="KW-0186">Copper</keyword>
<keyword id="KW-0249">Electron transport</keyword>
<keyword id="KW-0349">Heme</keyword>
<keyword id="KW-0408">Iron</keyword>
<keyword id="KW-0472">Membrane</keyword>
<keyword id="KW-0479">Metal-binding</keyword>
<keyword id="KW-1185">Reference proteome</keyword>
<keyword id="KW-0679">Respiratory chain</keyword>
<keyword id="KW-1278">Translocase</keyword>
<keyword id="KW-0812">Transmembrane</keyword>
<keyword id="KW-1133">Transmembrane helix</keyword>
<keyword id="KW-0813">Transport</keyword>
<sequence>MTAVAPRLENYAEPTRPAPTGGARKGTLAWKMLTTTDHKLLGMMYIVMSFVWFFVGGLMALLIRAELFSPGLQFLSNEQFNQLFTLHGTIMLLAFGTPVVWGFSNYILPLQIGAPDVAFPRLNAFGFWITQIGVVAMLAGFLTPGGAADFGWTMYLPLADSIHSPGVGGDFWIIGVGATGVGTIASAVNMITTILCMRAPGMTMFRMPIFCWNIFVASVIVLLIFPLLTAAALGVMYDRKLGGHIYDPGNGGAILWQHLFWFFGHPEVYVLALPFFGIVSEVIPVFARKPMFGYIGLVFATLSIGMLSMAVWAHHMFVTGAILLPFFSFMTFLISVPTGVKFFNWLGTMWRGHISWETPMTWTMGFLVTFLFGGLTGIMLASPPLDFHISDTYFVVAHFHYTLFGTVVFASYAGVYFWFPKMTGRMLDERLGKIHFWITFVGFHGTFLVQHWVGNEGMPRRYADYLESDGFTTLNQISTVFSFLLGVSVIPFIWNVFKSYRYGEIVTVDDPWGYGNSLEWATSCPPPRHNFTSLPRIRSERPAFELHYPHMVERMRREAHIGHH</sequence>
<accession>Q6NFM3</accession>
<gene>
    <name type="primary">ctaD</name>
    <name type="ordered locus">DIP1864</name>
</gene>
<dbReference type="EC" id="7.1.1.9"/>
<dbReference type="EMBL" id="BX248359">
    <property type="protein sequence ID" value="CAE50393.1"/>
    <property type="molecule type" value="Genomic_DNA"/>
</dbReference>
<dbReference type="RefSeq" id="WP_003852637.1">
    <property type="nucleotide sequence ID" value="NC_002935.2"/>
</dbReference>
<dbReference type="SMR" id="Q6NFM3"/>
<dbReference type="STRING" id="257309.DIP1864"/>
<dbReference type="GeneID" id="29421896"/>
<dbReference type="KEGG" id="cdi:DIP1864"/>
<dbReference type="HOGENOM" id="CLU_011899_7_3_11"/>
<dbReference type="UniPathway" id="UPA00705"/>
<dbReference type="Proteomes" id="UP000002198">
    <property type="component" value="Chromosome"/>
</dbReference>
<dbReference type="GO" id="GO:0005886">
    <property type="term" value="C:plasma membrane"/>
    <property type="evidence" value="ECO:0007669"/>
    <property type="project" value="UniProtKB-SubCell"/>
</dbReference>
<dbReference type="GO" id="GO:0004129">
    <property type="term" value="F:cytochrome-c oxidase activity"/>
    <property type="evidence" value="ECO:0007669"/>
    <property type="project" value="UniProtKB-EC"/>
</dbReference>
<dbReference type="GO" id="GO:0020037">
    <property type="term" value="F:heme binding"/>
    <property type="evidence" value="ECO:0007669"/>
    <property type="project" value="InterPro"/>
</dbReference>
<dbReference type="GO" id="GO:0046872">
    <property type="term" value="F:metal ion binding"/>
    <property type="evidence" value="ECO:0007669"/>
    <property type="project" value="UniProtKB-KW"/>
</dbReference>
<dbReference type="GO" id="GO:0015990">
    <property type="term" value="P:electron transport coupled proton transport"/>
    <property type="evidence" value="ECO:0007669"/>
    <property type="project" value="InterPro"/>
</dbReference>
<dbReference type="GO" id="GO:0006119">
    <property type="term" value="P:oxidative phosphorylation"/>
    <property type="evidence" value="ECO:0007669"/>
    <property type="project" value="UniProtKB-UniPathway"/>
</dbReference>
<dbReference type="GO" id="GO:0022904">
    <property type="term" value="P:respiratory electron transport chain"/>
    <property type="evidence" value="ECO:0007669"/>
    <property type="project" value="TreeGrafter"/>
</dbReference>
<dbReference type="CDD" id="cd01662">
    <property type="entry name" value="Ubiquinol_Oxidase_I"/>
    <property type="match status" value="1"/>
</dbReference>
<dbReference type="FunFam" id="1.20.210.10:FF:000003">
    <property type="entry name" value="Cytochrome c oxidase subunit 1"/>
    <property type="match status" value="1"/>
</dbReference>
<dbReference type="Gene3D" id="1.20.210.10">
    <property type="entry name" value="Cytochrome c oxidase-like, subunit I domain"/>
    <property type="match status" value="1"/>
</dbReference>
<dbReference type="InterPro" id="IPR023616">
    <property type="entry name" value="Cyt_c_oxase-like_su1_dom"/>
</dbReference>
<dbReference type="InterPro" id="IPR036927">
    <property type="entry name" value="Cyt_c_oxase-like_su1_sf"/>
</dbReference>
<dbReference type="InterPro" id="IPR000883">
    <property type="entry name" value="Cyt_C_Oxase_1"/>
</dbReference>
<dbReference type="InterPro" id="IPR023615">
    <property type="entry name" value="Cyt_c_Oxase_su1_BS"/>
</dbReference>
<dbReference type="InterPro" id="IPR014241">
    <property type="entry name" value="Cyt_c_oxidase_su1_bac"/>
</dbReference>
<dbReference type="NCBIfam" id="TIGR02891">
    <property type="entry name" value="CtaD_CoxA"/>
    <property type="match status" value="1"/>
</dbReference>
<dbReference type="PANTHER" id="PTHR10422">
    <property type="entry name" value="CYTOCHROME C OXIDASE SUBUNIT 1"/>
    <property type="match status" value="1"/>
</dbReference>
<dbReference type="PANTHER" id="PTHR10422:SF18">
    <property type="entry name" value="CYTOCHROME C OXIDASE SUBUNIT 1"/>
    <property type="match status" value="1"/>
</dbReference>
<dbReference type="Pfam" id="PF00115">
    <property type="entry name" value="COX1"/>
    <property type="match status" value="1"/>
</dbReference>
<dbReference type="PRINTS" id="PR01165">
    <property type="entry name" value="CYCOXIDASEI"/>
</dbReference>
<dbReference type="SUPFAM" id="SSF81442">
    <property type="entry name" value="Cytochrome c oxidase subunit I-like"/>
    <property type="match status" value="1"/>
</dbReference>
<dbReference type="PROSITE" id="PS50855">
    <property type="entry name" value="COX1"/>
    <property type="match status" value="1"/>
</dbReference>
<dbReference type="PROSITE" id="PS00077">
    <property type="entry name" value="COX1_CUB"/>
    <property type="match status" value="1"/>
</dbReference>
<proteinExistence type="inferred from homology"/>
<organism>
    <name type="scientific">Corynebacterium diphtheriae (strain ATCC 700971 / NCTC 13129 / Biotype gravis)</name>
    <dbReference type="NCBI Taxonomy" id="257309"/>
    <lineage>
        <taxon>Bacteria</taxon>
        <taxon>Bacillati</taxon>
        <taxon>Actinomycetota</taxon>
        <taxon>Actinomycetes</taxon>
        <taxon>Mycobacteriales</taxon>
        <taxon>Corynebacteriaceae</taxon>
        <taxon>Corynebacterium</taxon>
    </lineage>
</organism>